<protein>
    <recommendedName>
        <fullName evidence="6">Ethylene-inducing xylanase 3</fullName>
        <shortName evidence="6">EIX3</shortName>
        <ecNumber evidence="4">3.2.1.8</ecNumber>
    </recommendedName>
    <alternativeName>
        <fullName evidence="6">Endo-1,4-beta-xylanase EIX3</fullName>
    </alternativeName>
</protein>
<reference key="1">
    <citation type="journal article" date="2011" name="PLoS Pathog.">
        <title>Comparative genomics yields insights into niche adaptation of plant vascular wilt pathogens.</title>
        <authorList>
            <person name="Klosterman S.J."/>
            <person name="Subbarao K.V."/>
            <person name="Kang S."/>
            <person name="Veronese P."/>
            <person name="Gold S.E."/>
            <person name="Thomma B.P.H.J."/>
            <person name="Chen Z."/>
            <person name="Henrissat B."/>
            <person name="Lee Y.-H."/>
            <person name="Park J."/>
            <person name="Garcia-Pedrajas M.D."/>
            <person name="Barbara D.J."/>
            <person name="Anchieta A."/>
            <person name="de Jonge R."/>
            <person name="Santhanam P."/>
            <person name="Maruthachalam K."/>
            <person name="Atallah Z."/>
            <person name="Amyotte S.G."/>
            <person name="Paz Z."/>
            <person name="Inderbitzin P."/>
            <person name="Hayes R.J."/>
            <person name="Heiman D.I."/>
            <person name="Young S."/>
            <person name="Zeng Q."/>
            <person name="Engels R."/>
            <person name="Galagan J."/>
            <person name="Cuomo C.A."/>
            <person name="Dobinson K.F."/>
            <person name="Ma L.-J."/>
        </authorList>
    </citation>
    <scope>NUCLEOTIDE SEQUENCE [LARGE SCALE GENOMIC DNA]</scope>
    <source>
        <strain>VdLs.17 / ATCC MYA-4575 / FGSC 10137</strain>
    </source>
</reference>
<reference key="2">
    <citation type="journal article" date="2021" name="J. Integr. Plant Biol.">
        <title>Nicotiana benthamiana LRR-RLP NbEIX2 mediates the perception of an EIX-like protein from Verticillium dahliae.</title>
        <authorList>
            <person name="Yin Z."/>
            <person name="Wang N."/>
            <person name="Pi L."/>
            <person name="Li L."/>
            <person name="Duan W."/>
            <person name="Wang X."/>
            <person name="Dou D."/>
        </authorList>
    </citation>
    <scope>FUNCTION</scope>
</reference>
<organism>
    <name type="scientific">Verticillium dahliae (strain VdLs.17 / ATCC MYA-4575 / FGSC 10137)</name>
    <name type="common">Verticillium wilt</name>
    <dbReference type="NCBI Taxonomy" id="498257"/>
    <lineage>
        <taxon>Eukaryota</taxon>
        <taxon>Fungi</taxon>
        <taxon>Dikarya</taxon>
        <taxon>Ascomycota</taxon>
        <taxon>Pezizomycotina</taxon>
        <taxon>Sordariomycetes</taxon>
        <taxon>Hypocreomycetidae</taxon>
        <taxon>Glomerellales</taxon>
        <taxon>Plectosphaerellaceae</taxon>
        <taxon>Verticillium</taxon>
    </lineage>
</organism>
<feature type="signal peptide" evidence="2">
    <location>
        <begin position="1"/>
        <end position="19"/>
    </location>
</feature>
<feature type="chain" id="PRO_5003439575" description="Ethylene-inducing xylanase 3">
    <location>
        <begin position="20"/>
        <end position="294"/>
    </location>
</feature>
<feature type="domain" description="GH11" evidence="4">
    <location>
        <begin position="31"/>
        <end position="226"/>
    </location>
</feature>
<feature type="domain" description="CBM1" evidence="3">
    <location>
        <begin position="259"/>
        <end position="294"/>
    </location>
</feature>
<feature type="active site" description="Nucleophile" evidence="4">
    <location>
        <position position="122"/>
    </location>
</feature>
<feature type="active site" description="Proton donor" evidence="4">
    <location>
        <position position="213"/>
    </location>
</feature>
<name>EIX3_VERDV</name>
<evidence type="ECO:0000250" key="1">
    <source>
        <dbReference type="UniProtKB" id="B3VSG7"/>
    </source>
</evidence>
<evidence type="ECO:0000255" key="2"/>
<evidence type="ECO:0000255" key="3">
    <source>
        <dbReference type="PROSITE-ProRule" id="PRU00597"/>
    </source>
</evidence>
<evidence type="ECO:0000255" key="4">
    <source>
        <dbReference type="PROSITE-ProRule" id="PRU01097"/>
    </source>
</evidence>
<evidence type="ECO:0000269" key="5">
    <source>
    </source>
</evidence>
<evidence type="ECO:0000303" key="6">
    <source>
    </source>
</evidence>
<dbReference type="EC" id="3.2.1.8" evidence="4"/>
<dbReference type="EMBL" id="DS572707">
    <property type="protein sequence ID" value="EGY15311.1"/>
    <property type="molecule type" value="Genomic_DNA"/>
</dbReference>
<dbReference type="RefSeq" id="XP_009657474.1">
    <property type="nucleotide sequence ID" value="XM_009659179.1"/>
</dbReference>
<dbReference type="SMR" id="G2X8M4"/>
<dbReference type="STRING" id="498257.G2X8M4"/>
<dbReference type="EnsemblFungi" id="EGY15311">
    <property type="protein sequence ID" value="EGY15311"/>
    <property type="gene ID" value="VDAG_06165"/>
</dbReference>
<dbReference type="GeneID" id="20707628"/>
<dbReference type="KEGG" id="vda:VDAG_06165"/>
<dbReference type="eggNOG" id="ENOG502RXA7">
    <property type="taxonomic scope" value="Eukaryota"/>
</dbReference>
<dbReference type="HOGENOM" id="CLU_052631_0_1_1"/>
<dbReference type="InParanoid" id="G2X8M4"/>
<dbReference type="OMA" id="THFDAWA"/>
<dbReference type="OrthoDB" id="9408at1028384"/>
<dbReference type="UniPathway" id="UPA00114"/>
<dbReference type="Proteomes" id="UP000001611">
    <property type="component" value="Chromosome 8"/>
</dbReference>
<dbReference type="GO" id="GO:0005576">
    <property type="term" value="C:extracellular region"/>
    <property type="evidence" value="ECO:0007669"/>
    <property type="project" value="InterPro"/>
</dbReference>
<dbReference type="GO" id="GO:0030248">
    <property type="term" value="F:cellulose binding"/>
    <property type="evidence" value="ECO:0007669"/>
    <property type="project" value="InterPro"/>
</dbReference>
<dbReference type="GO" id="GO:0031176">
    <property type="term" value="F:endo-1,4-beta-xylanase activity"/>
    <property type="evidence" value="ECO:0007669"/>
    <property type="project" value="UniProtKB-UniRule"/>
</dbReference>
<dbReference type="GO" id="GO:0045493">
    <property type="term" value="P:xylan catabolic process"/>
    <property type="evidence" value="ECO:0007669"/>
    <property type="project" value="UniProtKB-UniRule"/>
</dbReference>
<dbReference type="FunFam" id="2.60.120.180:FF:000001">
    <property type="entry name" value="Endo-1,4-beta-xylanase"/>
    <property type="match status" value="1"/>
</dbReference>
<dbReference type="Gene3D" id="2.60.120.180">
    <property type="match status" value="1"/>
</dbReference>
<dbReference type="InterPro" id="IPR035971">
    <property type="entry name" value="CBD_sf"/>
</dbReference>
<dbReference type="InterPro" id="IPR000254">
    <property type="entry name" value="Cellulose-bd_dom_fun"/>
</dbReference>
<dbReference type="InterPro" id="IPR013320">
    <property type="entry name" value="ConA-like_dom_sf"/>
</dbReference>
<dbReference type="InterPro" id="IPR013319">
    <property type="entry name" value="GH11/12"/>
</dbReference>
<dbReference type="InterPro" id="IPR033119">
    <property type="entry name" value="GH11_AS_2"/>
</dbReference>
<dbReference type="InterPro" id="IPR033123">
    <property type="entry name" value="GH11_dom"/>
</dbReference>
<dbReference type="InterPro" id="IPR001137">
    <property type="entry name" value="Glyco_hydro_11"/>
</dbReference>
<dbReference type="PANTHER" id="PTHR46828:SF3">
    <property type="entry name" value="ENDO-1,4-BETA-XYLANASE"/>
    <property type="match status" value="1"/>
</dbReference>
<dbReference type="PANTHER" id="PTHR46828">
    <property type="entry name" value="ENDO-1,4-BETA-XYLANASE A-RELATED"/>
    <property type="match status" value="1"/>
</dbReference>
<dbReference type="Pfam" id="PF00734">
    <property type="entry name" value="CBM_1"/>
    <property type="match status" value="1"/>
</dbReference>
<dbReference type="Pfam" id="PF00457">
    <property type="entry name" value="Glyco_hydro_11"/>
    <property type="match status" value="1"/>
</dbReference>
<dbReference type="PRINTS" id="PR00911">
    <property type="entry name" value="GLHYDRLASE11"/>
</dbReference>
<dbReference type="SMART" id="SM00236">
    <property type="entry name" value="fCBD"/>
    <property type="match status" value="1"/>
</dbReference>
<dbReference type="SUPFAM" id="SSF57180">
    <property type="entry name" value="Cellulose-binding domain"/>
    <property type="match status" value="1"/>
</dbReference>
<dbReference type="SUPFAM" id="SSF49899">
    <property type="entry name" value="Concanavalin A-like lectins/glucanases"/>
    <property type="match status" value="1"/>
</dbReference>
<dbReference type="PROSITE" id="PS00562">
    <property type="entry name" value="CBM1_1"/>
    <property type="match status" value="1"/>
</dbReference>
<dbReference type="PROSITE" id="PS51164">
    <property type="entry name" value="CBM1_2"/>
    <property type="match status" value="1"/>
</dbReference>
<dbReference type="PROSITE" id="PS00777">
    <property type="entry name" value="GH11_2"/>
    <property type="match status" value="1"/>
</dbReference>
<dbReference type="PROSITE" id="PS51761">
    <property type="entry name" value="GH11_3"/>
    <property type="match status" value="1"/>
</dbReference>
<accession>G2X8M4</accession>
<gene>
    <name evidence="6" type="primary">EIX3</name>
    <name type="ORF">VDAG_06165</name>
</gene>
<sequence length="294" mass="30908">MVCFSSLFVAASAIAGVFASPVDHEQLAKRQSTPSSQGTHDGYFYSWWTDGGAAATYTNLAGGEYSVSWSNGGNLVGGKGWNPGSARTITYSGTYNPNGNSYLAVYGWTRNPQPWLTPLVVEYYVVENFGTYNPSSGATARGQVTHDGALYRLFESTRTNQPSIDGTATFQQYWAVRDVKRTGGTVNMATFFNAWTAAGMRLGTHNYQVVATEGYFSSGSARINVAGGGGSTPSPPSTPSPPTTPSPPPVTPPPSGGGSCAARWGQCGGSGWNGATCCSAGTCQAQNQWYSQCL</sequence>
<proteinExistence type="inferred from homology"/>
<keyword id="KW-0119">Carbohydrate metabolism</keyword>
<keyword id="KW-0326">Glycosidase</keyword>
<keyword id="KW-0378">Hydrolase</keyword>
<keyword id="KW-0624">Polysaccharide degradation</keyword>
<keyword id="KW-1185">Reference proteome</keyword>
<keyword id="KW-0732">Signal</keyword>
<keyword id="KW-0858">Xylan degradation</keyword>
<comment type="function">
    <text evidence="1 5">Endo-1,4-beta-xylanase involved in the hydrolysis of xylan, a major structural heterogeneous polysaccharide found in plant biomass representing the second most abundant polysaccharide in the biosphere, after cellulose (By similarity). Exhibits immunity-inducing activity in Nicotiana benthamiana (PubMed:33205907). Can induce strong oxidative burst, activate the expression of defense-related genes, and increase resistance against oomycete and fungal pathogens in N.benthamiana (PubMed:33205907).</text>
</comment>
<comment type="catalytic activity">
    <reaction evidence="4">
        <text>Endohydrolysis of (1-&gt;4)-beta-D-xylosidic linkages in xylans.</text>
        <dbReference type="EC" id="3.2.1.8"/>
    </reaction>
</comment>
<comment type="pathway">
    <text evidence="4">Glycan degradation; xylan degradation.</text>
</comment>
<comment type="similarity">
    <text evidence="4">Belongs to the glycosyl hydrolase 11 (cellulase G) family.</text>
</comment>